<sequence length="433" mass="48389">MAQEIELKFIVNHSAVEALRDHLNTLGGEHHDPVQLLNIYYETPDNWLRGHDMGLRIRGENGRYEMTMKVAGRVTGGLHQRPEYNVALSEPTLDLAQLPTEVWPNGELPADLASRVQPLFSTDFYREKWLVAVDGSQIEIALDQGEVKAGEFAEPICELELELLSGDTRAVLKLANQLVSQTGLRQGSLSKAARGYHLAQGNPAREIKPTTILHVAAKADVEQGLEAALELALAQWQYHEELWVRGNDAAKEQVLAAISLVRHTLMLFGGIVPRKASTHLRDLLTQCEATIASAVSAVTAVYSTETAMAKLALTEWLVSKAWQPFLDAKAQGKISDSFKRFADIHLSRHAAELKSVFCQPLGDRYRDQLPRLTRDIDSILLLAGYYDPVVAQAWLENWQGLHHAIATGQRIEIEHFRNEANNQEPFWLHSGKR</sequence>
<reference key="1">
    <citation type="journal article" date="1993" name="Mol. Microbiol.">
        <title>The genes of the glutamine synthetase adenylylation cascade are not regulated by nitrogen in Escherichia coli.</title>
        <authorList>
            <person name="van Heeswijk W.C."/>
            <person name="Rabenberg M."/>
            <person name="Westerhoff H.V."/>
            <person name="Kahn D.D."/>
        </authorList>
    </citation>
    <scope>NUCLEOTIDE SEQUENCE [GENOMIC DNA]</scope>
    <source>
        <strain>K12 / CS520</strain>
    </source>
</reference>
<reference key="2">
    <citation type="journal article" date="1997" name="Science">
        <title>The complete genome sequence of Escherichia coli K-12.</title>
        <authorList>
            <person name="Blattner F.R."/>
            <person name="Plunkett G. III"/>
            <person name="Bloch C.A."/>
            <person name="Perna N.T."/>
            <person name="Burland V."/>
            <person name="Riley M."/>
            <person name="Collado-Vides J."/>
            <person name="Glasner J.D."/>
            <person name="Rode C.K."/>
            <person name="Mayhew G.F."/>
            <person name="Gregor J."/>
            <person name="Davis N.W."/>
            <person name="Kirkpatrick H.A."/>
            <person name="Goeden M.A."/>
            <person name="Rose D.J."/>
            <person name="Mau B."/>
            <person name="Shao Y."/>
        </authorList>
    </citation>
    <scope>NUCLEOTIDE SEQUENCE [LARGE SCALE GENOMIC DNA]</scope>
    <source>
        <strain>K12 / MG1655 / ATCC 47076</strain>
    </source>
</reference>
<reference key="3">
    <citation type="journal article" date="2006" name="Mol. Syst. Biol.">
        <title>Highly accurate genome sequences of Escherichia coli K-12 strains MG1655 and W3110.</title>
        <authorList>
            <person name="Hayashi K."/>
            <person name="Morooka N."/>
            <person name="Yamamoto Y."/>
            <person name="Fujita K."/>
            <person name="Isono K."/>
            <person name="Choi S."/>
            <person name="Ohtsubo E."/>
            <person name="Baba T."/>
            <person name="Wanner B.L."/>
            <person name="Mori H."/>
            <person name="Horiuchi T."/>
        </authorList>
    </citation>
    <scope>NUCLEOTIDE SEQUENCE [LARGE SCALE GENOMIC DNA]</scope>
    <source>
        <strain>K12 / W3110 / ATCC 27325 / DSM 5911</strain>
    </source>
</reference>
<reference key="4">
    <citation type="journal article" date="2012" name="PLoS ONE">
        <title>High inorganic triphosphatase activities in bacteria and mammalian cells: identification of the enzymes involved.</title>
        <authorList>
            <person name="Kohn G."/>
            <person name="Delvaux D."/>
            <person name="Lakaye B."/>
            <person name="Servais A.C."/>
            <person name="Scholer G."/>
            <person name="Fillet M."/>
            <person name="Elias B."/>
            <person name="Derochette J.M."/>
            <person name="Crommen J."/>
            <person name="Wins P."/>
            <person name="Bettendorff L."/>
        </authorList>
    </citation>
    <scope>FUNCTION</scope>
    <scope>CATALYTIC ACTIVITY</scope>
    <scope>BIOPHYSICOCHEMICAL PROPERTIES</scope>
    <scope>DISRUPTION PHENOTYPE</scope>
    <scope>ACTIVITY REGULATION</scope>
    <scope>SUBSTRATE SPECIFICITY</scope>
</reference>
<comment type="function">
    <text evidence="3">Involved in the hydrolysis of the beta-gamma-phosphoanhydride linkage of triphosphate-containing substrates (inorganic or nucleoside-linked). Catalyzes the hydrolysis of inorganic triphosphate (PPPi), which could be cytotoxic because of its high affinity for calcium ion, thereby interfering with calcium signaling. It also hydrolyzes slowly thiamine triphosphate (ThTP). YgiF is a specific PPPase, but it contributes only marginally to the total PPPase activity in E.coli, where the main enzyme responsible for hydrolysis of PPPi is inorganic pyrophosphatase (PPase).</text>
</comment>
<comment type="catalytic activity">
    <reaction evidence="3">
        <text>triphosphate + H2O = phosphate + diphosphate</text>
        <dbReference type="Rhea" id="RHEA:14157"/>
        <dbReference type="ChEBI" id="CHEBI:15377"/>
        <dbReference type="ChEBI" id="CHEBI:18036"/>
        <dbReference type="ChEBI" id="CHEBI:33019"/>
        <dbReference type="ChEBI" id="CHEBI:43474"/>
        <dbReference type="EC" id="3.6.1.25"/>
    </reaction>
</comment>
<comment type="activity regulation">
    <text evidence="3">Inhibited by calcium ion and activated by magnesium ion.</text>
</comment>
<comment type="biophysicochemical properties">
    <kinetics>
        <KM evidence="3">270 uM for inorganic triphosphate</KM>
        <Vmax evidence="3">27.0 umol/min/mg enzyme</Vmax>
    </kinetics>
    <phDependence>
        <text evidence="3">Optimum pH is 8.5.</text>
    </phDependence>
</comment>
<comment type="disruption phenotype">
    <text evidence="3">Cells lacking this gene do not show decrease of specific PPPase activity.</text>
</comment>
<evidence type="ECO:0000255" key="1">
    <source>
        <dbReference type="PROSITE-ProRule" id="PRU01044"/>
    </source>
</evidence>
<evidence type="ECO:0000255" key="2">
    <source>
        <dbReference type="PROSITE-ProRule" id="PRU01045"/>
    </source>
</evidence>
<evidence type="ECO:0000269" key="3">
    <source>
    </source>
</evidence>
<evidence type="ECO:0007829" key="4">
    <source>
        <dbReference type="PDB" id="5A61"/>
    </source>
</evidence>
<dbReference type="EC" id="3.6.1.25"/>
<dbReference type="EMBL" id="Z21844">
    <property type="protein sequence ID" value="CAA79891.1"/>
    <property type="molecule type" value="Genomic_DNA"/>
</dbReference>
<dbReference type="EMBL" id="U00096">
    <property type="protein sequence ID" value="AAC76090.1"/>
    <property type="molecule type" value="Genomic_DNA"/>
</dbReference>
<dbReference type="EMBL" id="AP009048">
    <property type="protein sequence ID" value="BAE77105.1"/>
    <property type="molecule type" value="Genomic_DNA"/>
</dbReference>
<dbReference type="PIR" id="S37754">
    <property type="entry name" value="S37754"/>
</dbReference>
<dbReference type="RefSeq" id="NP_417526.1">
    <property type="nucleotide sequence ID" value="NC_000913.3"/>
</dbReference>
<dbReference type="RefSeq" id="WP_000046281.1">
    <property type="nucleotide sequence ID" value="NZ_LN832404.1"/>
</dbReference>
<dbReference type="PDB" id="5A60">
    <property type="method" value="X-ray"/>
    <property type="resolution" value="1.82 A"/>
    <property type="chains" value="A=1-433"/>
</dbReference>
<dbReference type="PDB" id="5A61">
    <property type="method" value="X-ray"/>
    <property type="resolution" value="1.50 A"/>
    <property type="chains" value="A=1-433"/>
</dbReference>
<dbReference type="PDBsum" id="5A60"/>
<dbReference type="PDBsum" id="5A61"/>
<dbReference type="SMR" id="P30871"/>
<dbReference type="BioGRID" id="4259253">
    <property type="interactions" value="13"/>
</dbReference>
<dbReference type="DIP" id="DIP-12218N"/>
<dbReference type="FunCoup" id="P30871">
    <property type="interactions" value="211"/>
</dbReference>
<dbReference type="IntAct" id="P30871">
    <property type="interactions" value="24"/>
</dbReference>
<dbReference type="STRING" id="511145.b3054"/>
<dbReference type="jPOST" id="P30871"/>
<dbReference type="PaxDb" id="511145-b3054"/>
<dbReference type="EnsemblBacteria" id="AAC76090">
    <property type="protein sequence ID" value="AAC76090"/>
    <property type="gene ID" value="b3054"/>
</dbReference>
<dbReference type="GeneID" id="947554"/>
<dbReference type="KEGG" id="ecj:JW3026"/>
<dbReference type="KEGG" id="eco:b3054"/>
<dbReference type="KEGG" id="ecoc:C3026_16685"/>
<dbReference type="PATRIC" id="fig|1411691.4.peg.3677"/>
<dbReference type="EchoBASE" id="EB1560"/>
<dbReference type="eggNOG" id="COG3025">
    <property type="taxonomic scope" value="Bacteria"/>
</dbReference>
<dbReference type="HOGENOM" id="CLU_040400_0_1_6"/>
<dbReference type="InParanoid" id="P30871"/>
<dbReference type="OMA" id="MPCDISK"/>
<dbReference type="OrthoDB" id="3034217at2"/>
<dbReference type="PhylomeDB" id="P30871"/>
<dbReference type="BioCyc" id="EcoCyc:EG11603-MONOMER"/>
<dbReference type="BioCyc" id="MetaCyc:EG11603-MONOMER"/>
<dbReference type="EvolutionaryTrace" id="P30871"/>
<dbReference type="PRO" id="PR:P30871"/>
<dbReference type="Proteomes" id="UP000000625">
    <property type="component" value="Chromosome"/>
</dbReference>
<dbReference type="GO" id="GO:0050355">
    <property type="term" value="F:inorganic triphosphate phosphatase activity"/>
    <property type="evidence" value="ECO:0000314"/>
    <property type="project" value="EcoCyc"/>
</dbReference>
<dbReference type="GO" id="GO:0046872">
    <property type="term" value="F:metal ion binding"/>
    <property type="evidence" value="ECO:0000314"/>
    <property type="project" value="EcoCyc"/>
</dbReference>
<dbReference type="CDD" id="cd07756">
    <property type="entry name" value="CYTH-like_Pase_CHAD"/>
    <property type="match status" value="1"/>
</dbReference>
<dbReference type="FunFam" id="2.40.320.10:FF:000002">
    <property type="entry name" value="Adenylate cyclase"/>
    <property type="match status" value="1"/>
</dbReference>
<dbReference type="Gene3D" id="2.40.320.10">
    <property type="entry name" value="Hypothetical Protein Pfu-838710-001"/>
    <property type="match status" value="1"/>
</dbReference>
<dbReference type="InterPro" id="IPR007899">
    <property type="entry name" value="CHAD_dom"/>
</dbReference>
<dbReference type="InterPro" id="IPR033469">
    <property type="entry name" value="CYTH-like_dom_sf"/>
</dbReference>
<dbReference type="InterPro" id="IPR023577">
    <property type="entry name" value="CYTH_domain"/>
</dbReference>
<dbReference type="InterPro" id="IPR039013">
    <property type="entry name" value="YgiF"/>
</dbReference>
<dbReference type="PANTHER" id="PTHR39569">
    <property type="entry name" value="INORGANIC TRIPHOSPHATASE"/>
    <property type="match status" value="1"/>
</dbReference>
<dbReference type="PANTHER" id="PTHR39569:SF1">
    <property type="entry name" value="INORGANIC TRIPHOSPHATASE"/>
    <property type="match status" value="1"/>
</dbReference>
<dbReference type="Pfam" id="PF05235">
    <property type="entry name" value="CHAD"/>
    <property type="match status" value="1"/>
</dbReference>
<dbReference type="Pfam" id="PF01928">
    <property type="entry name" value="CYTH"/>
    <property type="match status" value="1"/>
</dbReference>
<dbReference type="SMART" id="SM01118">
    <property type="entry name" value="CYTH"/>
    <property type="match status" value="1"/>
</dbReference>
<dbReference type="SUPFAM" id="SSF55154">
    <property type="entry name" value="CYTH-like phosphatases"/>
    <property type="match status" value="1"/>
</dbReference>
<dbReference type="PROSITE" id="PS51708">
    <property type="entry name" value="CHAD"/>
    <property type="match status" value="1"/>
</dbReference>
<dbReference type="PROSITE" id="PS51707">
    <property type="entry name" value="CYTH"/>
    <property type="match status" value="1"/>
</dbReference>
<name>3PASE_ECOLI</name>
<gene>
    <name type="primary">ygiF</name>
    <name type="ordered locus">b3054</name>
    <name type="ordered locus">JW3026</name>
</gene>
<keyword id="KW-0002">3D-structure</keyword>
<keyword id="KW-0378">Hydrolase</keyword>
<keyword id="KW-1185">Reference proteome</keyword>
<organism>
    <name type="scientific">Escherichia coli (strain K12)</name>
    <dbReference type="NCBI Taxonomy" id="83333"/>
    <lineage>
        <taxon>Bacteria</taxon>
        <taxon>Pseudomonadati</taxon>
        <taxon>Pseudomonadota</taxon>
        <taxon>Gammaproteobacteria</taxon>
        <taxon>Enterobacterales</taxon>
        <taxon>Enterobacteriaceae</taxon>
        <taxon>Escherichia</taxon>
    </lineage>
</organism>
<feature type="chain" id="PRO_0000169406" description="Inorganic triphosphatase">
    <location>
        <begin position="1"/>
        <end position="433"/>
    </location>
</feature>
<feature type="domain" description="CYTH" evidence="1">
    <location>
        <begin position="2"/>
        <end position="202"/>
    </location>
</feature>
<feature type="domain" description="CHAD" evidence="2">
    <location>
        <begin position="218"/>
        <end position="433"/>
    </location>
</feature>
<feature type="strand" evidence="4">
    <location>
        <begin position="2"/>
        <end position="11"/>
    </location>
</feature>
<feature type="helix" evidence="4">
    <location>
        <begin position="13"/>
        <end position="15"/>
    </location>
</feature>
<feature type="helix" evidence="4">
    <location>
        <begin position="16"/>
        <end position="23"/>
    </location>
</feature>
<feature type="strand" evidence="4">
    <location>
        <begin position="29"/>
        <end position="42"/>
    </location>
</feature>
<feature type="helix" evidence="4">
    <location>
        <begin position="47"/>
        <end position="50"/>
    </location>
</feature>
<feature type="strand" evidence="4">
    <location>
        <begin position="54"/>
        <end position="60"/>
    </location>
</feature>
<feature type="strand" evidence="4">
    <location>
        <begin position="63"/>
        <end position="69"/>
    </location>
</feature>
<feature type="strand" evidence="4">
    <location>
        <begin position="73"/>
        <end position="75"/>
    </location>
</feature>
<feature type="strand" evidence="4">
    <location>
        <begin position="78"/>
        <end position="92"/>
    </location>
</feature>
<feature type="helix" evidence="4">
    <location>
        <begin position="95"/>
        <end position="97"/>
    </location>
</feature>
<feature type="helix" evidence="4">
    <location>
        <begin position="100"/>
        <end position="102"/>
    </location>
</feature>
<feature type="strand" evidence="4">
    <location>
        <begin position="103"/>
        <end position="107"/>
    </location>
</feature>
<feature type="helix" evidence="4">
    <location>
        <begin position="112"/>
        <end position="115"/>
    </location>
</feature>
<feature type="strand" evidence="4">
    <location>
        <begin position="117"/>
        <end position="133"/>
    </location>
</feature>
<feature type="strand" evidence="4">
    <location>
        <begin position="136"/>
        <end position="149"/>
    </location>
</feature>
<feature type="strand" evidence="4">
    <location>
        <begin position="152"/>
        <end position="166"/>
    </location>
</feature>
<feature type="helix" evidence="4">
    <location>
        <begin position="168"/>
        <end position="178"/>
    </location>
</feature>
<feature type="strand" evidence="4">
    <location>
        <begin position="181"/>
        <end position="186"/>
    </location>
</feature>
<feature type="helix" evidence="4">
    <location>
        <begin position="191"/>
        <end position="199"/>
    </location>
</feature>
<feature type="helix" evidence="4">
    <location>
        <begin position="221"/>
        <end position="244"/>
    </location>
</feature>
<feature type="helix" evidence="4">
    <location>
        <begin position="250"/>
        <end position="267"/>
    </location>
</feature>
<feature type="turn" evidence="4">
    <location>
        <begin position="268"/>
        <end position="271"/>
    </location>
</feature>
<feature type="helix" evidence="4">
    <location>
        <begin position="274"/>
        <end position="277"/>
    </location>
</feature>
<feature type="helix" evidence="4">
    <location>
        <begin position="278"/>
        <end position="293"/>
    </location>
</feature>
<feature type="helix" evidence="4">
    <location>
        <begin position="297"/>
        <end position="302"/>
    </location>
</feature>
<feature type="helix" evidence="4">
    <location>
        <begin position="304"/>
        <end position="318"/>
    </location>
</feature>
<feature type="turn" evidence="4">
    <location>
        <begin position="319"/>
        <end position="322"/>
    </location>
</feature>
<feature type="helix" evidence="4">
    <location>
        <begin position="323"/>
        <end position="325"/>
    </location>
</feature>
<feature type="helix" evidence="4">
    <location>
        <begin position="328"/>
        <end position="334"/>
    </location>
</feature>
<feature type="helix" evidence="4">
    <location>
        <begin position="338"/>
        <end position="357"/>
    </location>
</feature>
<feature type="helix" evidence="4">
    <location>
        <begin position="366"/>
        <end position="368"/>
    </location>
</feature>
<feature type="helix" evidence="4">
    <location>
        <begin position="369"/>
        <end position="382"/>
    </location>
</feature>
<feature type="helix" evidence="4">
    <location>
        <begin position="388"/>
        <end position="407"/>
    </location>
</feature>
<feature type="helix" evidence="4">
    <location>
        <begin position="410"/>
        <end position="422"/>
    </location>
</feature>
<accession>P30871</accession>
<accession>Q2M9F1</accession>
<protein>
    <recommendedName>
        <fullName>Inorganic triphosphatase</fullName>
        <shortName>PPPase</shortName>
        <ecNumber>3.6.1.25</ecNumber>
    </recommendedName>
    <alternativeName>
        <fullName>ORFXE</fullName>
    </alternativeName>
</protein>
<proteinExistence type="evidence at protein level"/>